<evidence type="ECO:0000255" key="1">
    <source>
        <dbReference type="HAMAP-Rule" id="MF_00137"/>
    </source>
</evidence>
<comment type="catalytic activity">
    <reaction evidence="1">
        <text>5-amino-1-(5-phospho-D-ribosyl)imidazole-4-carboxylate + L-aspartate + ATP = (2S)-2-[5-amino-1-(5-phospho-beta-D-ribosyl)imidazole-4-carboxamido]succinate + ADP + phosphate + 2 H(+)</text>
        <dbReference type="Rhea" id="RHEA:22628"/>
        <dbReference type="ChEBI" id="CHEBI:15378"/>
        <dbReference type="ChEBI" id="CHEBI:29991"/>
        <dbReference type="ChEBI" id="CHEBI:30616"/>
        <dbReference type="ChEBI" id="CHEBI:43474"/>
        <dbReference type="ChEBI" id="CHEBI:58443"/>
        <dbReference type="ChEBI" id="CHEBI:77657"/>
        <dbReference type="ChEBI" id="CHEBI:456216"/>
        <dbReference type="EC" id="6.3.2.6"/>
    </reaction>
</comment>
<comment type="pathway">
    <text evidence="1">Purine metabolism; IMP biosynthesis via de novo pathway; 5-amino-1-(5-phospho-D-ribosyl)imidazole-4-carboxamide from 5-amino-1-(5-phospho-D-ribosyl)imidazole-4-carboxylate: step 1/2.</text>
</comment>
<comment type="similarity">
    <text evidence="1">Belongs to the SAICAR synthetase family.</text>
</comment>
<gene>
    <name evidence="1" type="primary">purC</name>
    <name type="ordered locus">RF_0339</name>
</gene>
<protein>
    <recommendedName>
        <fullName evidence="1">Phosphoribosylaminoimidazole-succinocarboxamide synthase</fullName>
        <ecNumber evidence="1">6.3.2.6</ecNumber>
    </recommendedName>
    <alternativeName>
        <fullName evidence="1">SAICAR synthetase</fullName>
    </alternativeName>
</protein>
<sequence>MKTQLYKGSSKILYSAEEDFLLIMAFSDNVTLESGEIIEISGKGVLNNNISSFLMDKLEMNGIENHFIEKINMREQLIQYVEVFPVQVIISSVACGRFVKEFGMDEGYVFDKPIIDFKVRSREFKYPIVNEYQILNFGWLTRDEIKAVKEQALRIYDFLSGLFIGVGIRLVECKLEFGRVFNGEESIIMLTDEISPDNCRLWHINSNEKLGFELLENEPNKAFESYQLIADRLKEK</sequence>
<feature type="chain" id="PRO_0000274848" description="Phosphoribosylaminoimidazole-succinocarboxamide synthase">
    <location>
        <begin position="1"/>
        <end position="236"/>
    </location>
</feature>
<reference key="1">
    <citation type="journal article" date="2005" name="PLoS Biol.">
        <title>The genome sequence of Rickettsia felis identifies the first putative conjugative plasmid in an obligate intracellular parasite.</title>
        <authorList>
            <person name="Ogata H."/>
            <person name="Renesto P."/>
            <person name="Audic S."/>
            <person name="Robert C."/>
            <person name="Blanc G."/>
            <person name="Fournier P.-E."/>
            <person name="Parinello H."/>
            <person name="Claverie J.-M."/>
            <person name="Raoult D."/>
        </authorList>
    </citation>
    <scope>NUCLEOTIDE SEQUENCE [LARGE SCALE GENOMIC DNA]</scope>
    <source>
        <strain>ATCC VR-1525 / URRWXCal2</strain>
    </source>
</reference>
<name>PUR7_RICFE</name>
<organism>
    <name type="scientific">Rickettsia felis (strain ATCC VR-1525 / URRWXCal2)</name>
    <name type="common">Rickettsia azadi</name>
    <dbReference type="NCBI Taxonomy" id="315456"/>
    <lineage>
        <taxon>Bacteria</taxon>
        <taxon>Pseudomonadati</taxon>
        <taxon>Pseudomonadota</taxon>
        <taxon>Alphaproteobacteria</taxon>
        <taxon>Rickettsiales</taxon>
        <taxon>Rickettsiaceae</taxon>
        <taxon>Rickettsieae</taxon>
        <taxon>Rickettsia</taxon>
        <taxon>spotted fever group</taxon>
    </lineage>
</organism>
<accession>Q4UML8</accession>
<proteinExistence type="inferred from homology"/>
<dbReference type="EC" id="6.3.2.6" evidence="1"/>
<dbReference type="EMBL" id="CP000053">
    <property type="protein sequence ID" value="AAY61190.1"/>
    <property type="molecule type" value="Genomic_DNA"/>
</dbReference>
<dbReference type="SMR" id="Q4UML8"/>
<dbReference type="STRING" id="315456.RF_0339"/>
<dbReference type="KEGG" id="rfe:RF_0339"/>
<dbReference type="eggNOG" id="COG0152">
    <property type="taxonomic scope" value="Bacteria"/>
</dbReference>
<dbReference type="HOGENOM" id="CLU_061495_2_0_5"/>
<dbReference type="OrthoDB" id="9801549at2"/>
<dbReference type="UniPathway" id="UPA00074">
    <property type="reaction ID" value="UER00131"/>
</dbReference>
<dbReference type="Proteomes" id="UP000008548">
    <property type="component" value="Chromosome"/>
</dbReference>
<dbReference type="GO" id="GO:0005829">
    <property type="term" value="C:cytosol"/>
    <property type="evidence" value="ECO:0007669"/>
    <property type="project" value="TreeGrafter"/>
</dbReference>
<dbReference type="GO" id="GO:0005524">
    <property type="term" value="F:ATP binding"/>
    <property type="evidence" value="ECO:0007669"/>
    <property type="project" value="UniProtKB-KW"/>
</dbReference>
<dbReference type="GO" id="GO:0004639">
    <property type="term" value="F:phosphoribosylaminoimidazolesuccinocarboxamide synthase activity"/>
    <property type="evidence" value="ECO:0007669"/>
    <property type="project" value="UniProtKB-UniRule"/>
</dbReference>
<dbReference type="GO" id="GO:0006189">
    <property type="term" value="P:'de novo' IMP biosynthetic process"/>
    <property type="evidence" value="ECO:0007669"/>
    <property type="project" value="UniProtKB-UniRule"/>
</dbReference>
<dbReference type="GO" id="GO:0009236">
    <property type="term" value="P:cobalamin biosynthetic process"/>
    <property type="evidence" value="ECO:0007669"/>
    <property type="project" value="InterPro"/>
</dbReference>
<dbReference type="CDD" id="cd01415">
    <property type="entry name" value="SAICAR_synt_PurC"/>
    <property type="match status" value="1"/>
</dbReference>
<dbReference type="Gene3D" id="3.30.470.20">
    <property type="entry name" value="ATP-grasp fold, B domain"/>
    <property type="match status" value="1"/>
</dbReference>
<dbReference type="Gene3D" id="3.30.200.20">
    <property type="entry name" value="Phosphorylase Kinase, domain 1"/>
    <property type="match status" value="1"/>
</dbReference>
<dbReference type="HAMAP" id="MF_00137">
    <property type="entry name" value="SAICAR_synth"/>
    <property type="match status" value="1"/>
</dbReference>
<dbReference type="InterPro" id="IPR028923">
    <property type="entry name" value="SAICAR_synt/ADE2_N"/>
</dbReference>
<dbReference type="InterPro" id="IPR033934">
    <property type="entry name" value="SAICAR_synt_PurC"/>
</dbReference>
<dbReference type="InterPro" id="IPR050089">
    <property type="entry name" value="SAICAR_synthetase"/>
</dbReference>
<dbReference type="PANTHER" id="PTHR43599">
    <property type="entry name" value="MULTIFUNCTIONAL PROTEIN ADE2"/>
    <property type="match status" value="1"/>
</dbReference>
<dbReference type="PANTHER" id="PTHR43599:SF3">
    <property type="entry name" value="SI:DKEY-6E2.2"/>
    <property type="match status" value="1"/>
</dbReference>
<dbReference type="Pfam" id="PF01259">
    <property type="entry name" value="SAICAR_synt"/>
    <property type="match status" value="1"/>
</dbReference>
<dbReference type="SUPFAM" id="SSF56104">
    <property type="entry name" value="SAICAR synthase-like"/>
    <property type="match status" value="1"/>
</dbReference>
<keyword id="KW-0067">ATP-binding</keyword>
<keyword id="KW-0436">Ligase</keyword>
<keyword id="KW-0547">Nucleotide-binding</keyword>
<keyword id="KW-0658">Purine biosynthesis</keyword>